<protein>
    <recommendedName>
        <fullName evidence="1">Transcriptional repressor NrdR</fullName>
    </recommendedName>
</protein>
<feature type="chain" id="PRO_1000080770" description="Transcriptional repressor NrdR">
    <location>
        <begin position="1"/>
        <end position="154"/>
    </location>
</feature>
<feature type="domain" description="ATP-cone" evidence="1">
    <location>
        <begin position="49"/>
        <end position="139"/>
    </location>
</feature>
<feature type="zinc finger region" evidence="1">
    <location>
        <begin position="3"/>
        <end position="34"/>
    </location>
</feature>
<organism>
    <name type="scientific">Listeria welshimeri serovar 6b (strain ATCC 35897 / DSM 20650 / CCUG 15529 / CIP 8149 / NCTC 11857 / SLCC 5334 / V8)</name>
    <dbReference type="NCBI Taxonomy" id="386043"/>
    <lineage>
        <taxon>Bacteria</taxon>
        <taxon>Bacillati</taxon>
        <taxon>Bacillota</taxon>
        <taxon>Bacilli</taxon>
        <taxon>Bacillales</taxon>
        <taxon>Listeriaceae</taxon>
        <taxon>Listeria</taxon>
    </lineage>
</organism>
<sequence>MRCPTCKYNGTRVVDSRPADDGNSIRRRRECEKCGFRFTTFEKVEESPLIVVKKDGAREEFAREKVRRGLIRACEKRPVSAEQIEEIVNEVERELRNIGDSEIASDLIGEKVMNKLANLDEVAYVRFASVYRQFKDISVFVEELKDLMEKNKDR</sequence>
<gene>
    <name evidence="1" type="primary">nrdR</name>
    <name type="ordered locus">lwe1575</name>
</gene>
<dbReference type="EMBL" id="AM263198">
    <property type="protein sequence ID" value="CAK20993.1"/>
    <property type="molecule type" value="Genomic_DNA"/>
</dbReference>
<dbReference type="RefSeq" id="WP_003719855.1">
    <property type="nucleotide sequence ID" value="NC_008555.1"/>
</dbReference>
<dbReference type="SMR" id="A0AJ11"/>
<dbReference type="STRING" id="386043.lwe1575"/>
<dbReference type="GeneID" id="61189452"/>
<dbReference type="KEGG" id="lwe:lwe1575"/>
<dbReference type="eggNOG" id="COG1327">
    <property type="taxonomic scope" value="Bacteria"/>
</dbReference>
<dbReference type="HOGENOM" id="CLU_108412_0_0_9"/>
<dbReference type="OrthoDB" id="9807461at2"/>
<dbReference type="Proteomes" id="UP000000779">
    <property type="component" value="Chromosome"/>
</dbReference>
<dbReference type="GO" id="GO:0005524">
    <property type="term" value="F:ATP binding"/>
    <property type="evidence" value="ECO:0007669"/>
    <property type="project" value="UniProtKB-KW"/>
</dbReference>
<dbReference type="GO" id="GO:0003677">
    <property type="term" value="F:DNA binding"/>
    <property type="evidence" value="ECO:0007669"/>
    <property type="project" value="UniProtKB-KW"/>
</dbReference>
<dbReference type="GO" id="GO:0008270">
    <property type="term" value="F:zinc ion binding"/>
    <property type="evidence" value="ECO:0007669"/>
    <property type="project" value="UniProtKB-UniRule"/>
</dbReference>
<dbReference type="GO" id="GO:0045892">
    <property type="term" value="P:negative regulation of DNA-templated transcription"/>
    <property type="evidence" value="ECO:0007669"/>
    <property type="project" value="UniProtKB-UniRule"/>
</dbReference>
<dbReference type="HAMAP" id="MF_00440">
    <property type="entry name" value="NrdR"/>
    <property type="match status" value="1"/>
</dbReference>
<dbReference type="InterPro" id="IPR005144">
    <property type="entry name" value="ATP-cone_dom"/>
</dbReference>
<dbReference type="InterPro" id="IPR055173">
    <property type="entry name" value="NrdR-like_N"/>
</dbReference>
<dbReference type="InterPro" id="IPR003796">
    <property type="entry name" value="RNR_NrdR-like"/>
</dbReference>
<dbReference type="NCBIfam" id="TIGR00244">
    <property type="entry name" value="transcriptional regulator NrdR"/>
    <property type="match status" value="1"/>
</dbReference>
<dbReference type="PANTHER" id="PTHR30455">
    <property type="entry name" value="TRANSCRIPTIONAL REPRESSOR NRDR"/>
    <property type="match status" value="1"/>
</dbReference>
<dbReference type="PANTHER" id="PTHR30455:SF2">
    <property type="entry name" value="TRANSCRIPTIONAL REPRESSOR NRDR"/>
    <property type="match status" value="1"/>
</dbReference>
<dbReference type="Pfam" id="PF03477">
    <property type="entry name" value="ATP-cone"/>
    <property type="match status" value="1"/>
</dbReference>
<dbReference type="Pfam" id="PF22811">
    <property type="entry name" value="Zn_ribbon_NrdR"/>
    <property type="match status" value="1"/>
</dbReference>
<dbReference type="PROSITE" id="PS51161">
    <property type="entry name" value="ATP_CONE"/>
    <property type="match status" value="1"/>
</dbReference>
<comment type="function">
    <text evidence="1">Negatively regulates transcription of bacterial ribonucleotide reductase nrd genes and operons by binding to NrdR-boxes.</text>
</comment>
<comment type="cofactor">
    <cofactor evidence="1">
        <name>Zn(2+)</name>
        <dbReference type="ChEBI" id="CHEBI:29105"/>
    </cofactor>
    <text evidence="1">Binds 1 zinc ion.</text>
</comment>
<comment type="similarity">
    <text evidence="1">Belongs to the NrdR family.</text>
</comment>
<keyword id="KW-0067">ATP-binding</keyword>
<keyword id="KW-0238">DNA-binding</keyword>
<keyword id="KW-0479">Metal-binding</keyword>
<keyword id="KW-0547">Nucleotide-binding</keyword>
<keyword id="KW-0678">Repressor</keyword>
<keyword id="KW-0804">Transcription</keyword>
<keyword id="KW-0805">Transcription regulation</keyword>
<keyword id="KW-0862">Zinc</keyword>
<keyword id="KW-0863">Zinc-finger</keyword>
<accession>A0AJ11</accession>
<proteinExistence type="inferred from homology"/>
<evidence type="ECO:0000255" key="1">
    <source>
        <dbReference type="HAMAP-Rule" id="MF_00440"/>
    </source>
</evidence>
<name>NRDR_LISW6</name>
<reference key="1">
    <citation type="journal article" date="2006" name="J. Bacteriol.">
        <title>Whole-genome sequence of Listeria welshimeri reveals common steps in genome reduction with Listeria innocua as compared to Listeria monocytogenes.</title>
        <authorList>
            <person name="Hain T."/>
            <person name="Steinweg C."/>
            <person name="Kuenne C.T."/>
            <person name="Billion A."/>
            <person name="Ghai R."/>
            <person name="Chatterjee S.S."/>
            <person name="Domann E."/>
            <person name="Kaerst U."/>
            <person name="Goesmann A."/>
            <person name="Bekel T."/>
            <person name="Bartels D."/>
            <person name="Kaiser O."/>
            <person name="Meyer F."/>
            <person name="Puehler A."/>
            <person name="Weisshaar B."/>
            <person name="Wehland J."/>
            <person name="Liang C."/>
            <person name="Dandekar T."/>
            <person name="Lampidis R."/>
            <person name="Kreft J."/>
            <person name="Goebel W."/>
            <person name="Chakraborty T."/>
        </authorList>
    </citation>
    <scope>NUCLEOTIDE SEQUENCE [LARGE SCALE GENOMIC DNA]</scope>
    <source>
        <strain>ATCC 35897 / DSM 20650 / CCUG 15529 / CIP 8149 / NCTC 11857 / SLCC 5334 / V8</strain>
    </source>
</reference>